<dbReference type="EC" id="1.4.3.5" evidence="1"/>
<dbReference type="EMBL" id="CP000539">
    <property type="protein sequence ID" value="ABM42234.1"/>
    <property type="molecule type" value="Genomic_DNA"/>
</dbReference>
<dbReference type="SMR" id="A1W7K9"/>
<dbReference type="STRING" id="232721.Ajs_2058"/>
<dbReference type="KEGG" id="ajs:Ajs_2058"/>
<dbReference type="eggNOG" id="COG0259">
    <property type="taxonomic scope" value="Bacteria"/>
</dbReference>
<dbReference type="HOGENOM" id="CLU_032263_2_2_4"/>
<dbReference type="UniPathway" id="UPA01068">
    <property type="reaction ID" value="UER00304"/>
</dbReference>
<dbReference type="UniPathway" id="UPA01068">
    <property type="reaction ID" value="UER00305"/>
</dbReference>
<dbReference type="Proteomes" id="UP000000645">
    <property type="component" value="Chromosome"/>
</dbReference>
<dbReference type="GO" id="GO:0010181">
    <property type="term" value="F:FMN binding"/>
    <property type="evidence" value="ECO:0007669"/>
    <property type="project" value="UniProtKB-UniRule"/>
</dbReference>
<dbReference type="GO" id="GO:0004733">
    <property type="term" value="F:pyridoxamine phosphate oxidase activity"/>
    <property type="evidence" value="ECO:0007669"/>
    <property type="project" value="UniProtKB-UniRule"/>
</dbReference>
<dbReference type="GO" id="GO:0008615">
    <property type="term" value="P:pyridoxine biosynthetic process"/>
    <property type="evidence" value="ECO:0007669"/>
    <property type="project" value="UniProtKB-KW"/>
</dbReference>
<dbReference type="Gene3D" id="2.30.110.10">
    <property type="entry name" value="Electron Transport, Fmn-binding Protein, Chain A"/>
    <property type="match status" value="1"/>
</dbReference>
<dbReference type="HAMAP" id="MF_01629">
    <property type="entry name" value="PdxH"/>
    <property type="match status" value="1"/>
</dbReference>
<dbReference type="InterPro" id="IPR000659">
    <property type="entry name" value="Pyridox_Oxase"/>
</dbReference>
<dbReference type="InterPro" id="IPR019740">
    <property type="entry name" value="Pyridox_Oxase_CS"/>
</dbReference>
<dbReference type="InterPro" id="IPR011576">
    <property type="entry name" value="Pyridox_Oxase_N"/>
</dbReference>
<dbReference type="InterPro" id="IPR019576">
    <property type="entry name" value="Pyridoxamine_oxidase_dimer_C"/>
</dbReference>
<dbReference type="InterPro" id="IPR012349">
    <property type="entry name" value="Split_barrel_FMN-bd"/>
</dbReference>
<dbReference type="NCBIfam" id="TIGR00558">
    <property type="entry name" value="pdxH"/>
    <property type="match status" value="1"/>
</dbReference>
<dbReference type="NCBIfam" id="NF004231">
    <property type="entry name" value="PRK05679.1"/>
    <property type="match status" value="1"/>
</dbReference>
<dbReference type="PANTHER" id="PTHR10851:SF0">
    <property type="entry name" value="PYRIDOXINE-5'-PHOSPHATE OXIDASE"/>
    <property type="match status" value="1"/>
</dbReference>
<dbReference type="PANTHER" id="PTHR10851">
    <property type="entry name" value="PYRIDOXINE-5-PHOSPHATE OXIDASE"/>
    <property type="match status" value="1"/>
</dbReference>
<dbReference type="Pfam" id="PF10590">
    <property type="entry name" value="PNP_phzG_C"/>
    <property type="match status" value="1"/>
</dbReference>
<dbReference type="Pfam" id="PF01243">
    <property type="entry name" value="PNPOx_N"/>
    <property type="match status" value="1"/>
</dbReference>
<dbReference type="PIRSF" id="PIRSF000190">
    <property type="entry name" value="Pyd_amn-ph_oxd"/>
    <property type="match status" value="1"/>
</dbReference>
<dbReference type="SUPFAM" id="SSF50475">
    <property type="entry name" value="FMN-binding split barrel"/>
    <property type="match status" value="1"/>
</dbReference>
<dbReference type="PROSITE" id="PS01064">
    <property type="entry name" value="PYRIDOX_OXIDASE"/>
    <property type="match status" value="1"/>
</dbReference>
<evidence type="ECO:0000255" key="1">
    <source>
        <dbReference type="HAMAP-Rule" id="MF_01629"/>
    </source>
</evidence>
<proteinExistence type="inferred from homology"/>
<accession>A1W7K9</accession>
<reference key="1">
    <citation type="submission" date="2006-12" db="EMBL/GenBank/DDBJ databases">
        <title>Complete sequence of chromosome 1 of Acidovorax sp. JS42.</title>
        <authorList>
            <person name="Copeland A."/>
            <person name="Lucas S."/>
            <person name="Lapidus A."/>
            <person name="Barry K."/>
            <person name="Detter J.C."/>
            <person name="Glavina del Rio T."/>
            <person name="Dalin E."/>
            <person name="Tice H."/>
            <person name="Pitluck S."/>
            <person name="Chertkov O."/>
            <person name="Brettin T."/>
            <person name="Bruce D."/>
            <person name="Han C."/>
            <person name="Tapia R."/>
            <person name="Gilna P."/>
            <person name="Schmutz J."/>
            <person name="Larimer F."/>
            <person name="Land M."/>
            <person name="Hauser L."/>
            <person name="Kyrpides N."/>
            <person name="Kim E."/>
            <person name="Stahl D."/>
            <person name="Richardson P."/>
        </authorList>
    </citation>
    <scope>NUCLEOTIDE SEQUENCE [LARGE SCALE GENOMIC DNA]</scope>
    <source>
        <strain>JS42</strain>
    </source>
</reference>
<name>PDXH_ACISJ</name>
<feature type="chain" id="PRO_0000292283" description="Pyridoxine/pyridoxamine 5'-phosphate oxidase">
    <location>
        <begin position="1"/>
        <end position="217"/>
    </location>
</feature>
<feature type="binding site" evidence="1">
    <location>
        <begin position="14"/>
        <end position="17"/>
    </location>
    <ligand>
        <name>substrate</name>
    </ligand>
</feature>
<feature type="binding site" evidence="1">
    <location>
        <begin position="67"/>
        <end position="72"/>
    </location>
    <ligand>
        <name>FMN</name>
        <dbReference type="ChEBI" id="CHEBI:58210"/>
    </ligand>
</feature>
<feature type="binding site" evidence="1">
    <location>
        <position position="72"/>
    </location>
    <ligand>
        <name>substrate</name>
    </ligand>
</feature>
<feature type="binding site" evidence="1">
    <location>
        <begin position="82"/>
        <end position="83"/>
    </location>
    <ligand>
        <name>FMN</name>
        <dbReference type="ChEBI" id="CHEBI:58210"/>
    </ligand>
</feature>
<feature type="binding site" evidence="1">
    <location>
        <position position="88"/>
    </location>
    <ligand>
        <name>FMN</name>
        <dbReference type="ChEBI" id="CHEBI:58210"/>
    </ligand>
</feature>
<feature type="binding site" evidence="1">
    <location>
        <position position="89"/>
    </location>
    <ligand>
        <name>FMN</name>
        <dbReference type="ChEBI" id="CHEBI:58210"/>
    </ligand>
</feature>
<feature type="binding site" evidence="1">
    <location>
        <position position="129"/>
    </location>
    <ligand>
        <name>substrate</name>
    </ligand>
</feature>
<feature type="binding site" evidence="1">
    <location>
        <position position="133"/>
    </location>
    <ligand>
        <name>substrate</name>
    </ligand>
</feature>
<feature type="binding site" evidence="1">
    <location>
        <position position="137"/>
    </location>
    <ligand>
        <name>substrate</name>
    </ligand>
</feature>
<feature type="binding site" evidence="1">
    <location>
        <begin position="146"/>
        <end position="147"/>
    </location>
    <ligand>
        <name>FMN</name>
        <dbReference type="ChEBI" id="CHEBI:58210"/>
    </ligand>
</feature>
<feature type="binding site" evidence="1">
    <location>
        <position position="190"/>
    </location>
    <ligand>
        <name>FMN</name>
        <dbReference type="ChEBI" id="CHEBI:58210"/>
    </ligand>
</feature>
<feature type="binding site" evidence="1">
    <location>
        <begin position="196"/>
        <end position="198"/>
    </location>
    <ligand>
        <name>substrate</name>
    </ligand>
</feature>
<feature type="binding site" evidence="1">
    <location>
        <position position="200"/>
    </location>
    <ligand>
        <name>FMN</name>
        <dbReference type="ChEBI" id="CHEBI:58210"/>
    </ligand>
</feature>
<organism>
    <name type="scientific">Acidovorax sp. (strain JS42)</name>
    <dbReference type="NCBI Taxonomy" id="232721"/>
    <lineage>
        <taxon>Bacteria</taxon>
        <taxon>Pseudomonadati</taxon>
        <taxon>Pseudomonadota</taxon>
        <taxon>Betaproteobacteria</taxon>
        <taxon>Burkholderiales</taxon>
        <taxon>Comamonadaceae</taxon>
        <taxon>Acidovorax</taxon>
    </lineage>
</organism>
<sequence length="217" mass="24795">MSHSPLSSSIADLRKSYERAELSEDASHADPLLQFDQWLREAIAAQVPEPNAMTVATVGSDLRPSTRVVLIKGYDAQGIVWYTNYDSRKGRQIAGNPYAALQFHWVELERVVRIEGVVEKVSEAESDAYFHSRPLDSRIGAWASPQSQVIPSRGMLVANAAKYGAQFLLKPPRPPHWGGFRLRPDQWEFWQGRKSRLHDRLRYRLEDGTWERERLAP</sequence>
<gene>
    <name evidence="1" type="primary">pdxH</name>
    <name type="ordered locus">Ajs_2058</name>
</gene>
<protein>
    <recommendedName>
        <fullName evidence="1">Pyridoxine/pyridoxamine 5'-phosphate oxidase</fullName>
        <ecNumber evidence="1">1.4.3.5</ecNumber>
    </recommendedName>
    <alternativeName>
        <fullName evidence="1">PNP/PMP oxidase</fullName>
        <shortName evidence="1">PNPOx</shortName>
    </alternativeName>
    <alternativeName>
        <fullName evidence="1">Pyridoxal 5'-phosphate synthase</fullName>
    </alternativeName>
</protein>
<comment type="function">
    <text evidence="1">Catalyzes the oxidation of either pyridoxine 5'-phosphate (PNP) or pyridoxamine 5'-phosphate (PMP) into pyridoxal 5'-phosphate (PLP).</text>
</comment>
<comment type="catalytic activity">
    <reaction evidence="1">
        <text>pyridoxamine 5'-phosphate + O2 + H2O = pyridoxal 5'-phosphate + H2O2 + NH4(+)</text>
        <dbReference type="Rhea" id="RHEA:15817"/>
        <dbReference type="ChEBI" id="CHEBI:15377"/>
        <dbReference type="ChEBI" id="CHEBI:15379"/>
        <dbReference type="ChEBI" id="CHEBI:16240"/>
        <dbReference type="ChEBI" id="CHEBI:28938"/>
        <dbReference type="ChEBI" id="CHEBI:58451"/>
        <dbReference type="ChEBI" id="CHEBI:597326"/>
        <dbReference type="EC" id="1.4.3.5"/>
    </reaction>
</comment>
<comment type="catalytic activity">
    <reaction evidence="1">
        <text>pyridoxine 5'-phosphate + O2 = pyridoxal 5'-phosphate + H2O2</text>
        <dbReference type="Rhea" id="RHEA:15149"/>
        <dbReference type="ChEBI" id="CHEBI:15379"/>
        <dbReference type="ChEBI" id="CHEBI:16240"/>
        <dbReference type="ChEBI" id="CHEBI:58589"/>
        <dbReference type="ChEBI" id="CHEBI:597326"/>
        <dbReference type="EC" id="1.4.3.5"/>
    </reaction>
</comment>
<comment type="cofactor">
    <cofactor evidence="1">
        <name>FMN</name>
        <dbReference type="ChEBI" id="CHEBI:58210"/>
    </cofactor>
    <text evidence="1">Binds 1 FMN per subunit.</text>
</comment>
<comment type="pathway">
    <text evidence="1">Cofactor metabolism; pyridoxal 5'-phosphate salvage; pyridoxal 5'-phosphate from pyridoxamine 5'-phosphate: step 1/1.</text>
</comment>
<comment type="pathway">
    <text evidence="1">Cofactor metabolism; pyridoxal 5'-phosphate salvage; pyridoxal 5'-phosphate from pyridoxine 5'-phosphate: step 1/1.</text>
</comment>
<comment type="subunit">
    <text evidence="1">Homodimer.</text>
</comment>
<comment type="similarity">
    <text evidence="1">Belongs to the pyridoxamine 5'-phosphate oxidase family.</text>
</comment>
<keyword id="KW-0285">Flavoprotein</keyword>
<keyword id="KW-0288">FMN</keyword>
<keyword id="KW-0560">Oxidoreductase</keyword>
<keyword id="KW-0664">Pyridoxine biosynthesis</keyword>